<name>PYRE_STRPD</name>
<sequence length="209" mass="22785">MTLASQIATQLLDIKAIYLKPEDPFTWASGIKSPIYTDNRVTLSYPKTRDLIENGFVETIRAHFPEVEVIAGTATAGIPHGAIIADKMTLPFAYIRSKPKDHGAGNQIEGRVLKGQKMVIIEDLISTGGSVLDAAAAASREGADVLGVVAIFTYELPKASQNFKEAGIKLITLSNYTELIAVAKLQGYITNDGLHLLKKFKEDQVNWQQ</sequence>
<organism>
    <name type="scientific">Streptococcus pyogenes serotype M2 (strain MGAS10270)</name>
    <dbReference type="NCBI Taxonomy" id="370552"/>
    <lineage>
        <taxon>Bacteria</taxon>
        <taxon>Bacillati</taxon>
        <taxon>Bacillota</taxon>
        <taxon>Bacilli</taxon>
        <taxon>Lactobacillales</taxon>
        <taxon>Streptococcaceae</taxon>
        <taxon>Streptococcus</taxon>
    </lineage>
</organism>
<keyword id="KW-0328">Glycosyltransferase</keyword>
<keyword id="KW-0460">Magnesium</keyword>
<keyword id="KW-0665">Pyrimidine biosynthesis</keyword>
<keyword id="KW-0808">Transferase</keyword>
<proteinExistence type="inferred from homology"/>
<feature type="chain" id="PRO_1000066309" description="Orotate phosphoribosyltransferase">
    <location>
        <begin position="1"/>
        <end position="209"/>
    </location>
</feature>
<feature type="binding site" evidence="1">
    <location>
        <position position="96"/>
    </location>
    <ligand>
        <name>5-phospho-alpha-D-ribose 1-diphosphate</name>
        <dbReference type="ChEBI" id="CHEBI:58017"/>
        <note>ligand shared between dimeric partners</note>
    </ligand>
</feature>
<feature type="binding site" evidence="1">
    <location>
        <position position="100"/>
    </location>
    <ligand>
        <name>5-phospho-alpha-D-ribose 1-diphosphate</name>
        <dbReference type="ChEBI" id="CHEBI:58017"/>
        <note>ligand shared between dimeric partners</note>
    </ligand>
</feature>
<feature type="binding site" evidence="1">
    <location>
        <position position="102"/>
    </location>
    <ligand>
        <name>5-phospho-alpha-D-ribose 1-diphosphate</name>
        <dbReference type="ChEBI" id="CHEBI:58017"/>
        <note>ligand shared between dimeric partners</note>
    </ligand>
</feature>
<feature type="binding site" description="in other chain" evidence="1">
    <location>
        <begin position="122"/>
        <end position="130"/>
    </location>
    <ligand>
        <name>5-phospho-alpha-D-ribose 1-diphosphate</name>
        <dbReference type="ChEBI" id="CHEBI:58017"/>
        <note>ligand shared between dimeric partners</note>
    </ligand>
</feature>
<feature type="binding site" evidence="1">
    <location>
        <position position="126"/>
    </location>
    <ligand>
        <name>orotate</name>
        <dbReference type="ChEBI" id="CHEBI:30839"/>
    </ligand>
</feature>
<protein>
    <recommendedName>
        <fullName evidence="1">Orotate phosphoribosyltransferase</fullName>
        <shortName evidence="1">OPRT</shortName>
        <shortName evidence="1">OPRTase</shortName>
        <ecNumber evidence="1">2.4.2.10</ecNumber>
    </recommendedName>
</protein>
<accession>Q1JHA9</accession>
<gene>
    <name evidence="1" type="primary">pyrE</name>
    <name type="ordered locus">MGAS10270_Spy0762</name>
</gene>
<evidence type="ECO:0000255" key="1">
    <source>
        <dbReference type="HAMAP-Rule" id="MF_01208"/>
    </source>
</evidence>
<dbReference type="EC" id="2.4.2.10" evidence="1"/>
<dbReference type="EMBL" id="CP000260">
    <property type="protein sequence ID" value="ABF33827.1"/>
    <property type="molecule type" value="Genomic_DNA"/>
</dbReference>
<dbReference type="SMR" id="Q1JHA9"/>
<dbReference type="KEGG" id="sph:MGAS10270_Spy0762"/>
<dbReference type="HOGENOM" id="CLU_074878_1_1_9"/>
<dbReference type="UniPathway" id="UPA00070">
    <property type="reaction ID" value="UER00119"/>
</dbReference>
<dbReference type="Proteomes" id="UP000002436">
    <property type="component" value="Chromosome"/>
</dbReference>
<dbReference type="GO" id="GO:0000287">
    <property type="term" value="F:magnesium ion binding"/>
    <property type="evidence" value="ECO:0007669"/>
    <property type="project" value="UniProtKB-UniRule"/>
</dbReference>
<dbReference type="GO" id="GO:0004588">
    <property type="term" value="F:orotate phosphoribosyltransferase activity"/>
    <property type="evidence" value="ECO:0007669"/>
    <property type="project" value="UniProtKB-UniRule"/>
</dbReference>
<dbReference type="GO" id="GO:0044205">
    <property type="term" value="P:'de novo' UMP biosynthetic process"/>
    <property type="evidence" value="ECO:0007669"/>
    <property type="project" value="UniProtKB-UniRule"/>
</dbReference>
<dbReference type="GO" id="GO:0019856">
    <property type="term" value="P:pyrimidine nucleobase biosynthetic process"/>
    <property type="evidence" value="ECO:0007669"/>
    <property type="project" value="TreeGrafter"/>
</dbReference>
<dbReference type="CDD" id="cd06223">
    <property type="entry name" value="PRTases_typeI"/>
    <property type="match status" value="1"/>
</dbReference>
<dbReference type="Gene3D" id="3.40.50.2020">
    <property type="match status" value="1"/>
</dbReference>
<dbReference type="HAMAP" id="MF_01208">
    <property type="entry name" value="PyrE"/>
    <property type="match status" value="1"/>
</dbReference>
<dbReference type="InterPro" id="IPR023031">
    <property type="entry name" value="OPRT"/>
</dbReference>
<dbReference type="InterPro" id="IPR004467">
    <property type="entry name" value="Or_phspho_trans_dom"/>
</dbReference>
<dbReference type="InterPro" id="IPR000836">
    <property type="entry name" value="PRibTrfase_dom"/>
</dbReference>
<dbReference type="InterPro" id="IPR029057">
    <property type="entry name" value="PRTase-like"/>
</dbReference>
<dbReference type="NCBIfam" id="TIGR00336">
    <property type="entry name" value="pyrE"/>
    <property type="match status" value="1"/>
</dbReference>
<dbReference type="PANTHER" id="PTHR19278">
    <property type="entry name" value="OROTATE PHOSPHORIBOSYLTRANSFERASE"/>
    <property type="match status" value="1"/>
</dbReference>
<dbReference type="PANTHER" id="PTHR19278:SF9">
    <property type="entry name" value="URIDINE 5'-MONOPHOSPHATE SYNTHASE"/>
    <property type="match status" value="1"/>
</dbReference>
<dbReference type="Pfam" id="PF00156">
    <property type="entry name" value="Pribosyltran"/>
    <property type="match status" value="1"/>
</dbReference>
<dbReference type="SUPFAM" id="SSF53271">
    <property type="entry name" value="PRTase-like"/>
    <property type="match status" value="1"/>
</dbReference>
<dbReference type="PROSITE" id="PS00103">
    <property type="entry name" value="PUR_PYR_PR_TRANSFER"/>
    <property type="match status" value="1"/>
</dbReference>
<reference key="1">
    <citation type="journal article" date="2006" name="Proc. Natl. Acad. Sci. U.S.A.">
        <title>Molecular genetic anatomy of inter- and intraserotype variation in the human bacterial pathogen group A Streptococcus.</title>
        <authorList>
            <person name="Beres S.B."/>
            <person name="Richter E.W."/>
            <person name="Nagiec M.J."/>
            <person name="Sumby P."/>
            <person name="Porcella S.F."/>
            <person name="DeLeo F.R."/>
            <person name="Musser J.M."/>
        </authorList>
    </citation>
    <scope>NUCLEOTIDE SEQUENCE [LARGE SCALE GENOMIC DNA]</scope>
    <source>
        <strain>MGAS10270</strain>
    </source>
</reference>
<comment type="function">
    <text evidence="1">Catalyzes the transfer of a ribosyl phosphate group from 5-phosphoribose 1-diphosphate to orotate, leading to the formation of orotidine monophosphate (OMP).</text>
</comment>
<comment type="catalytic activity">
    <reaction evidence="1">
        <text>orotidine 5'-phosphate + diphosphate = orotate + 5-phospho-alpha-D-ribose 1-diphosphate</text>
        <dbReference type="Rhea" id="RHEA:10380"/>
        <dbReference type="ChEBI" id="CHEBI:30839"/>
        <dbReference type="ChEBI" id="CHEBI:33019"/>
        <dbReference type="ChEBI" id="CHEBI:57538"/>
        <dbReference type="ChEBI" id="CHEBI:58017"/>
        <dbReference type="EC" id="2.4.2.10"/>
    </reaction>
</comment>
<comment type="cofactor">
    <cofactor evidence="1">
        <name>Mg(2+)</name>
        <dbReference type="ChEBI" id="CHEBI:18420"/>
    </cofactor>
</comment>
<comment type="pathway">
    <text evidence="1">Pyrimidine metabolism; UMP biosynthesis via de novo pathway; UMP from orotate: step 1/2.</text>
</comment>
<comment type="subunit">
    <text evidence="1">Homodimer.</text>
</comment>
<comment type="similarity">
    <text evidence="1">Belongs to the purine/pyrimidine phosphoribosyltransferase family. PyrE subfamily.</text>
</comment>